<sequence length="226" mass="24729">MRFGIVVFPGSNCDIDCYYVLKDELQQEVEYIWHEEELKEGFDCIILPGGFSYGDYLRCGAVAQFSKVMEGVKVYAHAGGLVVGICNGFQILTEAGLLPGALVRNKGLKFICDTTPLKVTEANSPFTNQYQKGEVIQIPIAHGEGNYVVDEVTLAEMKTKGQILFTYGENPNGSTGDIAGICNEGKNVMGLMPHPERASEALLGNVDGKKFFQSIMHYLEGGKNND</sequence>
<evidence type="ECO:0000255" key="1">
    <source>
        <dbReference type="HAMAP-Rule" id="MF_00421"/>
    </source>
</evidence>
<proteinExistence type="inferred from homology"/>
<accession>A6TLS2</accession>
<name>PURQ_ALKMQ</name>
<protein>
    <recommendedName>
        <fullName evidence="1">Phosphoribosylformylglycinamidine synthase subunit PurQ</fullName>
        <shortName evidence="1">FGAM synthase</shortName>
        <ecNumber evidence="1">6.3.5.3</ecNumber>
    </recommendedName>
    <alternativeName>
        <fullName evidence="1">Formylglycinamide ribonucleotide amidotransferase subunit I</fullName>
        <shortName evidence="1">FGAR amidotransferase I</shortName>
        <shortName evidence="1">FGAR-AT I</shortName>
    </alternativeName>
    <alternativeName>
        <fullName evidence="1">Glutaminase PurQ</fullName>
        <ecNumber evidence="1">3.5.1.2</ecNumber>
    </alternativeName>
    <alternativeName>
        <fullName evidence="1">Phosphoribosylformylglycinamidine synthase subunit I</fullName>
    </alternativeName>
</protein>
<keyword id="KW-0067">ATP-binding</keyword>
<keyword id="KW-0963">Cytoplasm</keyword>
<keyword id="KW-0315">Glutamine amidotransferase</keyword>
<keyword id="KW-0378">Hydrolase</keyword>
<keyword id="KW-0436">Ligase</keyword>
<keyword id="KW-0547">Nucleotide-binding</keyword>
<keyword id="KW-0658">Purine biosynthesis</keyword>
<keyword id="KW-1185">Reference proteome</keyword>
<organism>
    <name type="scientific">Alkaliphilus metalliredigens (strain QYMF)</name>
    <dbReference type="NCBI Taxonomy" id="293826"/>
    <lineage>
        <taxon>Bacteria</taxon>
        <taxon>Bacillati</taxon>
        <taxon>Bacillota</taxon>
        <taxon>Clostridia</taxon>
        <taxon>Peptostreptococcales</taxon>
        <taxon>Natronincolaceae</taxon>
        <taxon>Alkaliphilus</taxon>
    </lineage>
</organism>
<comment type="function">
    <text evidence="1">Part of the phosphoribosylformylglycinamidine synthase complex involved in the purines biosynthetic pathway. Catalyzes the ATP-dependent conversion of formylglycinamide ribonucleotide (FGAR) and glutamine to yield formylglycinamidine ribonucleotide (FGAM) and glutamate. The FGAM synthase complex is composed of three subunits. PurQ produces an ammonia molecule by converting glutamine to glutamate. PurL transfers the ammonia molecule to FGAR to form FGAM in an ATP-dependent manner. PurS interacts with PurQ and PurL and is thought to assist in the transfer of the ammonia molecule from PurQ to PurL.</text>
</comment>
<comment type="catalytic activity">
    <reaction evidence="1">
        <text>N(2)-formyl-N(1)-(5-phospho-beta-D-ribosyl)glycinamide + L-glutamine + ATP + H2O = 2-formamido-N(1)-(5-O-phospho-beta-D-ribosyl)acetamidine + L-glutamate + ADP + phosphate + H(+)</text>
        <dbReference type="Rhea" id="RHEA:17129"/>
        <dbReference type="ChEBI" id="CHEBI:15377"/>
        <dbReference type="ChEBI" id="CHEBI:15378"/>
        <dbReference type="ChEBI" id="CHEBI:29985"/>
        <dbReference type="ChEBI" id="CHEBI:30616"/>
        <dbReference type="ChEBI" id="CHEBI:43474"/>
        <dbReference type="ChEBI" id="CHEBI:58359"/>
        <dbReference type="ChEBI" id="CHEBI:147286"/>
        <dbReference type="ChEBI" id="CHEBI:147287"/>
        <dbReference type="ChEBI" id="CHEBI:456216"/>
        <dbReference type="EC" id="6.3.5.3"/>
    </reaction>
</comment>
<comment type="catalytic activity">
    <reaction evidence="1">
        <text>L-glutamine + H2O = L-glutamate + NH4(+)</text>
        <dbReference type="Rhea" id="RHEA:15889"/>
        <dbReference type="ChEBI" id="CHEBI:15377"/>
        <dbReference type="ChEBI" id="CHEBI:28938"/>
        <dbReference type="ChEBI" id="CHEBI:29985"/>
        <dbReference type="ChEBI" id="CHEBI:58359"/>
        <dbReference type="EC" id="3.5.1.2"/>
    </reaction>
</comment>
<comment type="pathway">
    <text evidence="1">Purine metabolism; IMP biosynthesis via de novo pathway; 5-amino-1-(5-phospho-D-ribosyl)imidazole from N(2)-formyl-N(1)-(5-phospho-D-ribosyl)glycinamide: step 1/2.</text>
</comment>
<comment type="subunit">
    <text evidence="1">Part of the FGAM synthase complex composed of 1 PurL, 1 PurQ and 2 PurS subunits.</text>
</comment>
<comment type="subcellular location">
    <subcellularLocation>
        <location evidence="1">Cytoplasm</location>
    </subcellularLocation>
</comment>
<gene>
    <name evidence="1" type="primary">purQ</name>
    <name type="ordered locus">Amet_0920</name>
</gene>
<feature type="chain" id="PRO_1000194841" description="Phosphoribosylformylglycinamidine synthase subunit PurQ">
    <location>
        <begin position="1"/>
        <end position="226"/>
    </location>
</feature>
<feature type="domain" description="Glutamine amidotransferase type-1" evidence="1">
    <location>
        <begin position="2"/>
        <end position="225"/>
    </location>
</feature>
<feature type="active site" description="Nucleophile" evidence="1">
    <location>
        <position position="86"/>
    </location>
</feature>
<feature type="active site" evidence="1">
    <location>
        <position position="194"/>
    </location>
</feature>
<feature type="active site" evidence="1">
    <location>
        <position position="196"/>
    </location>
</feature>
<reference key="1">
    <citation type="journal article" date="2016" name="Genome Announc.">
        <title>Complete genome sequence of Alkaliphilus metalliredigens strain QYMF, an alkaliphilic and metal-reducing bacterium isolated from borax-contaminated leachate ponds.</title>
        <authorList>
            <person name="Hwang C."/>
            <person name="Copeland A."/>
            <person name="Lucas S."/>
            <person name="Lapidus A."/>
            <person name="Barry K."/>
            <person name="Detter J.C."/>
            <person name="Glavina Del Rio T."/>
            <person name="Hammon N."/>
            <person name="Israni S."/>
            <person name="Dalin E."/>
            <person name="Tice H."/>
            <person name="Pitluck S."/>
            <person name="Chertkov O."/>
            <person name="Brettin T."/>
            <person name="Bruce D."/>
            <person name="Han C."/>
            <person name="Schmutz J."/>
            <person name="Larimer F."/>
            <person name="Land M.L."/>
            <person name="Hauser L."/>
            <person name="Kyrpides N."/>
            <person name="Mikhailova N."/>
            <person name="Ye Q."/>
            <person name="Zhou J."/>
            <person name="Richardson P."/>
            <person name="Fields M.W."/>
        </authorList>
    </citation>
    <scope>NUCLEOTIDE SEQUENCE [LARGE SCALE GENOMIC DNA]</scope>
    <source>
        <strain>QYMF</strain>
    </source>
</reference>
<dbReference type="EC" id="6.3.5.3" evidence="1"/>
<dbReference type="EC" id="3.5.1.2" evidence="1"/>
<dbReference type="EMBL" id="CP000724">
    <property type="protein sequence ID" value="ABR47140.1"/>
    <property type="molecule type" value="Genomic_DNA"/>
</dbReference>
<dbReference type="RefSeq" id="WP_012062182.1">
    <property type="nucleotide sequence ID" value="NC_009633.1"/>
</dbReference>
<dbReference type="SMR" id="A6TLS2"/>
<dbReference type="STRING" id="293826.Amet_0920"/>
<dbReference type="KEGG" id="amt:Amet_0920"/>
<dbReference type="eggNOG" id="COG0047">
    <property type="taxonomic scope" value="Bacteria"/>
</dbReference>
<dbReference type="HOGENOM" id="CLU_001031_3_1_9"/>
<dbReference type="OrthoDB" id="9804441at2"/>
<dbReference type="UniPathway" id="UPA00074">
    <property type="reaction ID" value="UER00128"/>
</dbReference>
<dbReference type="Proteomes" id="UP000001572">
    <property type="component" value="Chromosome"/>
</dbReference>
<dbReference type="GO" id="GO:0005737">
    <property type="term" value="C:cytoplasm"/>
    <property type="evidence" value="ECO:0007669"/>
    <property type="project" value="UniProtKB-SubCell"/>
</dbReference>
<dbReference type="GO" id="GO:0005524">
    <property type="term" value="F:ATP binding"/>
    <property type="evidence" value="ECO:0007669"/>
    <property type="project" value="UniProtKB-KW"/>
</dbReference>
<dbReference type="GO" id="GO:0004359">
    <property type="term" value="F:glutaminase activity"/>
    <property type="evidence" value="ECO:0007669"/>
    <property type="project" value="UniProtKB-EC"/>
</dbReference>
<dbReference type="GO" id="GO:0004642">
    <property type="term" value="F:phosphoribosylformylglycinamidine synthase activity"/>
    <property type="evidence" value="ECO:0007669"/>
    <property type="project" value="UniProtKB-UniRule"/>
</dbReference>
<dbReference type="GO" id="GO:0006189">
    <property type="term" value="P:'de novo' IMP biosynthetic process"/>
    <property type="evidence" value="ECO:0007669"/>
    <property type="project" value="UniProtKB-UniRule"/>
</dbReference>
<dbReference type="CDD" id="cd01740">
    <property type="entry name" value="GATase1_FGAR_AT"/>
    <property type="match status" value="1"/>
</dbReference>
<dbReference type="Gene3D" id="3.40.50.880">
    <property type="match status" value="1"/>
</dbReference>
<dbReference type="HAMAP" id="MF_00421">
    <property type="entry name" value="PurQ"/>
    <property type="match status" value="1"/>
</dbReference>
<dbReference type="InterPro" id="IPR029062">
    <property type="entry name" value="Class_I_gatase-like"/>
</dbReference>
<dbReference type="InterPro" id="IPR010075">
    <property type="entry name" value="PRibForGlyAmidine_synth_PurQ"/>
</dbReference>
<dbReference type="NCBIfam" id="TIGR01737">
    <property type="entry name" value="FGAM_synth_I"/>
    <property type="match status" value="1"/>
</dbReference>
<dbReference type="NCBIfam" id="NF002957">
    <property type="entry name" value="PRK03619.1"/>
    <property type="match status" value="1"/>
</dbReference>
<dbReference type="PANTHER" id="PTHR47552">
    <property type="entry name" value="PHOSPHORIBOSYLFORMYLGLYCINAMIDINE SYNTHASE SUBUNIT PURQ"/>
    <property type="match status" value="1"/>
</dbReference>
<dbReference type="PANTHER" id="PTHR47552:SF1">
    <property type="entry name" value="PHOSPHORIBOSYLFORMYLGLYCINAMIDINE SYNTHASE SUBUNIT PURQ"/>
    <property type="match status" value="1"/>
</dbReference>
<dbReference type="Pfam" id="PF13507">
    <property type="entry name" value="GATase_5"/>
    <property type="match status" value="1"/>
</dbReference>
<dbReference type="PIRSF" id="PIRSF001586">
    <property type="entry name" value="FGAM_synth_I"/>
    <property type="match status" value="1"/>
</dbReference>
<dbReference type="SMART" id="SM01211">
    <property type="entry name" value="GATase_5"/>
    <property type="match status" value="1"/>
</dbReference>
<dbReference type="SUPFAM" id="SSF52317">
    <property type="entry name" value="Class I glutamine amidotransferase-like"/>
    <property type="match status" value="1"/>
</dbReference>
<dbReference type="PROSITE" id="PS51273">
    <property type="entry name" value="GATASE_TYPE_1"/>
    <property type="match status" value="1"/>
</dbReference>